<sequence length="427" mass="48760">MEWPARLCGLWALLLCAGGGGGGGGAAPTETQPPVTNLSVSVENLCTVIWTWNPPEGASSNCSLWYFSHFGDKQDKKIAPETRRSIEVPLNERICLQVGSQCSTNESEKPSILVEKCISPPEGDPESAVTELQCIWHNLSYMKCSWLPGRNTSPDTNYTLYYWHRSLEKIHQCENIFREGQYFGCSFDLTKVKDSSFEQHSVQIMVKDNAGKIKPSFNIVPLTSRVKPDPPHIKNLSFHNDDLYVQWENPQNFISRCLFYEVEVNNSQTETHNVFYVQEAKCENPEFERNVENTSCFMVPGVLPDTLNTVRIRVKTNKLCYEDDKLWSNWSQEMSIGKKRNSTLYITMLLIVPVIVAGAIIVLLLYLKRLKIIIFPPIPDPGKIFKEMFGDQNDDTLHWKKYDIYEKQTKEETDSVVLIENLKKASQ</sequence>
<reference key="1">
    <citation type="journal article" date="1997" name="FEBS Lett.">
        <title>Cloning of the human IL-13R alpha1 chain and reconstitution with the IL4R alpha of a functional IL-4/IL-13 receptor complex.</title>
        <authorList>
            <person name="Miloux B."/>
            <person name="Laurent P."/>
            <person name="Bonnin O."/>
            <person name="Lupker J."/>
            <person name="Caput D."/>
            <person name="Vita N."/>
            <person name="Ferrara P."/>
        </authorList>
    </citation>
    <scope>NUCLEOTIDE SEQUENCE [MRNA] (ISOFORM 1)</scope>
    <source>
        <tissue>Carcinoma</tissue>
    </source>
</reference>
<reference key="2">
    <citation type="submission" date="1997-01" db="EMBL/GenBank/DDBJ databases">
        <authorList>
            <person name="Gauchat J.-F."/>
            <person name="Schlagenhauf E."/>
            <person name="Feng N.P."/>
            <person name="Moser R."/>
            <person name="Yamage M."/>
            <person name="Jeannin P."/>
            <person name="Alouani S."/>
            <person name="Elson G."/>
            <person name="Notarangelo L.D."/>
            <person name="Wells T."/>
            <person name="Eugster H.P."/>
            <person name="Bonnefoy J.-Y."/>
        </authorList>
    </citation>
    <scope>NUCLEOTIDE SEQUENCE [MRNA] (ISOFORM 1)</scope>
    <source>
        <tissue>B-cell</tissue>
    </source>
</reference>
<reference key="3">
    <citation type="journal article" date="1996" name="J. Biol. Chem.">
        <title>cDNA cloning and characterization of the human interleukin 13 receptor alpha chain.</title>
        <authorList>
            <person name="Aman M.J."/>
            <person name="Tayebi N."/>
            <person name="Obiri N.I."/>
            <person name="Puri R.K."/>
            <person name="Modi W.S."/>
            <person name="Leonard W.J."/>
        </authorList>
    </citation>
    <scope>NUCLEOTIDE SEQUENCE [MRNA] (ISOFORM 1)</scope>
    <source>
        <tissue>T-cell</tissue>
    </source>
</reference>
<reference key="4">
    <citation type="submission" date="1999-09" db="EMBL/GenBank/DDBJ databases">
        <authorList>
            <person name="Wada M."/>
            <person name="Hisano T."/>
            <person name="Kuwano M."/>
        </authorList>
    </citation>
    <scope>NUCLEOTIDE SEQUENCE [MRNA] (ISOFORMS 1 AND 2)</scope>
</reference>
<reference key="5">
    <citation type="journal article" date="2004" name="Nat. Genet.">
        <title>Complete sequencing and characterization of 21,243 full-length human cDNAs.</title>
        <authorList>
            <person name="Ota T."/>
            <person name="Suzuki Y."/>
            <person name="Nishikawa T."/>
            <person name="Otsuki T."/>
            <person name="Sugiyama T."/>
            <person name="Irie R."/>
            <person name="Wakamatsu A."/>
            <person name="Hayashi K."/>
            <person name="Sato H."/>
            <person name="Nagai K."/>
            <person name="Kimura K."/>
            <person name="Makita H."/>
            <person name="Sekine M."/>
            <person name="Obayashi M."/>
            <person name="Nishi T."/>
            <person name="Shibahara T."/>
            <person name="Tanaka T."/>
            <person name="Ishii S."/>
            <person name="Yamamoto J."/>
            <person name="Saito K."/>
            <person name="Kawai Y."/>
            <person name="Isono Y."/>
            <person name="Nakamura Y."/>
            <person name="Nagahari K."/>
            <person name="Murakami K."/>
            <person name="Yasuda T."/>
            <person name="Iwayanagi T."/>
            <person name="Wagatsuma M."/>
            <person name="Shiratori A."/>
            <person name="Sudo H."/>
            <person name="Hosoiri T."/>
            <person name="Kaku Y."/>
            <person name="Kodaira H."/>
            <person name="Kondo H."/>
            <person name="Sugawara M."/>
            <person name="Takahashi M."/>
            <person name="Kanda K."/>
            <person name="Yokoi T."/>
            <person name="Furuya T."/>
            <person name="Kikkawa E."/>
            <person name="Omura Y."/>
            <person name="Abe K."/>
            <person name="Kamihara K."/>
            <person name="Katsuta N."/>
            <person name="Sato K."/>
            <person name="Tanikawa M."/>
            <person name="Yamazaki M."/>
            <person name="Ninomiya K."/>
            <person name="Ishibashi T."/>
            <person name="Yamashita H."/>
            <person name="Murakawa K."/>
            <person name="Fujimori K."/>
            <person name="Tanai H."/>
            <person name="Kimata M."/>
            <person name="Watanabe M."/>
            <person name="Hiraoka S."/>
            <person name="Chiba Y."/>
            <person name="Ishida S."/>
            <person name="Ono Y."/>
            <person name="Takiguchi S."/>
            <person name="Watanabe S."/>
            <person name="Yosida M."/>
            <person name="Hotuta T."/>
            <person name="Kusano J."/>
            <person name="Kanehori K."/>
            <person name="Takahashi-Fujii A."/>
            <person name="Hara H."/>
            <person name="Tanase T.-O."/>
            <person name="Nomura Y."/>
            <person name="Togiya S."/>
            <person name="Komai F."/>
            <person name="Hara R."/>
            <person name="Takeuchi K."/>
            <person name="Arita M."/>
            <person name="Imose N."/>
            <person name="Musashino K."/>
            <person name="Yuuki H."/>
            <person name="Oshima A."/>
            <person name="Sasaki N."/>
            <person name="Aotsuka S."/>
            <person name="Yoshikawa Y."/>
            <person name="Matsunawa H."/>
            <person name="Ichihara T."/>
            <person name="Shiohata N."/>
            <person name="Sano S."/>
            <person name="Moriya S."/>
            <person name="Momiyama H."/>
            <person name="Satoh N."/>
            <person name="Takami S."/>
            <person name="Terashima Y."/>
            <person name="Suzuki O."/>
            <person name="Nakagawa S."/>
            <person name="Senoh A."/>
            <person name="Mizoguchi H."/>
            <person name="Goto Y."/>
            <person name="Shimizu F."/>
            <person name="Wakebe H."/>
            <person name="Hishigaki H."/>
            <person name="Watanabe T."/>
            <person name="Sugiyama A."/>
            <person name="Takemoto M."/>
            <person name="Kawakami B."/>
            <person name="Yamazaki M."/>
            <person name="Watanabe K."/>
            <person name="Kumagai A."/>
            <person name="Itakura S."/>
            <person name="Fukuzumi Y."/>
            <person name="Fujimori Y."/>
            <person name="Komiyama M."/>
            <person name="Tashiro H."/>
            <person name="Tanigami A."/>
            <person name="Fujiwara T."/>
            <person name="Ono T."/>
            <person name="Yamada K."/>
            <person name="Fujii Y."/>
            <person name="Ozaki K."/>
            <person name="Hirao M."/>
            <person name="Ohmori Y."/>
            <person name="Kawabata A."/>
            <person name="Hikiji T."/>
            <person name="Kobatake N."/>
            <person name="Inagaki H."/>
            <person name="Ikema Y."/>
            <person name="Okamoto S."/>
            <person name="Okitani R."/>
            <person name="Kawakami T."/>
            <person name="Noguchi S."/>
            <person name="Itoh T."/>
            <person name="Shigeta K."/>
            <person name="Senba T."/>
            <person name="Matsumura K."/>
            <person name="Nakajima Y."/>
            <person name="Mizuno T."/>
            <person name="Morinaga M."/>
            <person name="Sasaki M."/>
            <person name="Togashi T."/>
            <person name="Oyama M."/>
            <person name="Hata H."/>
            <person name="Watanabe M."/>
            <person name="Komatsu T."/>
            <person name="Mizushima-Sugano J."/>
            <person name="Satoh T."/>
            <person name="Shirai Y."/>
            <person name="Takahashi Y."/>
            <person name="Nakagawa K."/>
            <person name="Okumura K."/>
            <person name="Nagase T."/>
            <person name="Nomura N."/>
            <person name="Kikuchi H."/>
            <person name="Masuho Y."/>
            <person name="Yamashita R."/>
            <person name="Nakai K."/>
            <person name="Yada T."/>
            <person name="Nakamura Y."/>
            <person name="Ohara O."/>
            <person name="Isogai T."/>
            <person name="Sugano S."/>
        </authorList>
    </citation>
    <scope>NUCLEOTIDE SEQUENCE [LARGE SCALE MRNA] (ISOFORM 1)</scope>
    <source>
        <tissue>Hippocampus</tissue>
    </source>
</reference>
<reference key="6">
    <citation type="journal article" date="2005" name="Nature">
        <title>The DNA sequence of the human X chromosome.</title>
        <authorList>
            <person name="Ross M.T."/>
            <person name="Grafham D.V."/>
            <person name="Coffey A.J."/>
            <person name="Scherer S."/>
            <person name="McLay K."/>
            <person name="Muzny D."/>
            <person name="Platzer M."/>
            <person name="Howell G.R."/>
            <person name="Burrows C."/>
            <person name="Bird C.P."/>
            <person name="Frankish A."/>
            <person name="Lovell F.L."/>
            <person name="Howe K.L."/>
            <person name="Ashurst J.L."/>
            <person name="Fulton R.S."/>
            <person name="Sudbrak R."/>
            <person name="Wen G."/>
            <person name="Jones M.C."/>
            <person name="Hurles M.E."/>
            <person name="Andrews T.D."/>
            <person name="Scott C.E."/>
            <person name="Searle S."/>
            <person name="Ramser J."/>
            <person name="Whittaker A."/>
            <person name="Deadman R."/>
            <person name="Carter N.P."/>
            <person name="Hunt S.E."/>
            <person name="Chen R."/>
            <person name="Cree A."/>
            <person name="Gunaratne P."/>
            <person name="Havlak P."/>
            <person name="Hodgson A."/>
            <person name="Metzker M.L."/>
            <person name="Richards S."/>
            <person name="Scott G."/>
            <person name="Steffen D."/>
            <person name="Sodergren E."/>
            <person name="Wheeler D.A."/>
            <person name="Worley K.C."/>
            <person name="Ainscough R."/>
            <person name="Ambrose K.D."/>
            <person name="Ansari-Lari M.A."/>
            <person name="Aradhya S."/>
            <person name="Ashwell R.I."/>
            <person name="Babbage A.K."/>
            <person name="Bagguley C.L."/>
            <person name="Ballabio A."/>
            <person name="Banerjee R."/>
            <person name="Barker G.E."/>
            <person name="Barlow K.F."/>
            <person name="Barrett I.P."/>
            <person name="Bates K.N."/>
            <person name="Beare D.M."/>
            <person name="Beasley H."/>
            <person name="Beasley O."/>
            <person name="Beck A."/>
            <person name="Bethel G."/>
            <person name="Blechschmidt K."/>
            <person name="Brady N."/>
            <person name="Bray-Allen S."/>
            <person name="Bridgeman A.M."/>
            <person name="Brown A.J."/>
            <person name="Brown M.J."/>
            <person name="Bonnin D."/>
            <person name="Bruford E.A."/>
            <person name="Buhay C."/>
            <person name="Burch P."/>
            <person name="Burford D."/>
            <person name="Burgess J."/>
            <person name="Burrill W."/>
            <person name="Burton J."/>
            <person name="Bye J.M."/>
            <person name="Carder C."/>
            <person name="Carrel L."/>
            <person name="Chako J."/>
            <person name="Chapman J.C."/>
            <person name="Chavez D."/>
            <person name="Chen E."/>
            <person name="Chen G."/>
            <person name="Chen Y."/>
            <person name="Chen Z."/>
            <person name="Chinault C."/>
            <person name="Ciccodicola A."/>
            <person name="Clark S.Y."/>
            <person name="Clarke G."/>
            <person name="Clee C.M."/>
            <person name="Clegg S."/>
            <person name="Clerc-Blankenburg K."/>
            <person name="Clifford K."/>
            <person name="Cobley V."/>
            <person name="Cole C.G."/>
            <person name="Conquer J.S."/>
            <person name="Corby N."/>
            <person name="Connor R.E."/>
            <person name="David R."/>
            <person name="Davies J."/>
            <person name="Davis C."/>
            <person name="Davis J."/>
            <person name="Delgado O."/>
            <person name="Deshazo D."/>
            <person name="Dhami P."/>
            <person name="Ding Y."/>
            <person name="Dinh H."/>
            <person name="Dodsworth S."/>
            <person name="Draper H."/>
            <person name="Dugan-Rocha S."/>
            <person name="Dunham A."/>
            <person name="Dunn M."/>
            <person name="Durbin K.J."/>
            <person name="Dutta I."/>
            <person name="Eades T."/>
            <person name="Ellwood M."/>
            <person name="Emery-Cohen A."/>
            <person name="Errington H."/>
            <person name="Evans K.L."/>
            <person name="Faulkner L."/>
            <person name="Francis F."/>
            <person name="Frankland J."/>
            <person name="Fraser A.E."/>
            <person name="Galgoczy P."/>
            <person name="Gilbert J."/>
            <person name="Gill R."/>
            <person name="Gloeckner G."/>
            <person name="Gregory S.G."/>
            <person name="Gribble S."/>
            <person name="Griffiths C."/>
            <person name="Grocock R."/>
            <person name="Gu Y."/>
            <person name="Gwilliam R."/>
            <person name="Hamilton C."/>
            <person name="Hart E.A."/>
            <person name="Hawes A."/>
            <person name="Heath P.D."/>
            <person name="Heitmann K."/>
            <person name="Hennig S."/>
            <person name="Hernandez J."/>
            <person name="Hinzmann B."/>
            <person name="Ho S."/>
            <person name="Hoffs M."/>
            <person name="Howden P.J."/>
            <person name="Huckle E.J."/>
            <person name="Hume J."/>
            <person name="Hunt P.J."/>
            <person name="Hunt A.R."/>
            <person name="Isherwood J."/>
            <person name="Jacob L."/>
            <person name="Johnson D."/>
            <person name="Jones S."/>
            <person name="de Jong P.J."/>
            <person name="Joseph S.S."/>
            <person name="Keenan S."/>
            <person name="Kelly S."/>
            <person name="Kershaw J.K."/>
            <person name="Khan Z."/>
            <person name="Kioschis P."/>
            <person name="Klages S."/>
            <person name="Knights A.J."/>
            <person name="Kosiura A."/>
            <person name="Kovar-Smith C."/>
            <person name="Laird G.K."/>
            <person name="Langford C."/>
            <person name="Lawlor S."/>
            <person name="Leversha M."/>
            <person name="Lewis L."/>
            <person name="Liu W."/>
            <person name="Lloyd C."/>
            <person name="Lloyd D.M."/>
            <person name="Loulseged H."/>
            <person name="Loveland J.E."/>
            <person name="Lovell J.D."/>
            <person name="Lozado R."/>
            <person name="Lu J."/>
            <person name="Lyne R."/>
            <person name="Ma J."/>
            <person name="Maheshwari M."/>
            <person name="Matthews L.H."/>
            <person name="McDowall J."/>
            <person name="McLaren S."/>
            <person name="McMurray A."/>
            <person name="Meidl P."/>
            <person name="Meitinger T."/>
            <person name="Milne S."/>
            <person name="Miner G."/>
            <person name="Mistry S.L."/>
            <person name="Morgan M."/>
            <person name="Morris S."/>
            <person name="Mueller I."/>
            <person name="Mullikin J.C."/>
            <person name="Nguyen N."/>
            <person name="Nordsiek G."/>
            <person name="Nyakatura G."/>
            <person name="O'dell C.N."/>
            <person name="Okwuonu G."/>
            <person name="Palmer S."/>
            <person name="Pandian R."/>
            <person name="Parker D."/>
            <person name="Parrish J."/>
            <person name="Pasternak S."/>
            <person name="Patel D."/>
            <person name="Pearce A.V."/>
            <person name="Pearson D.M."/>
            <person name="Pelan S.E."/>
            <person name="Perez L."/>
            <person name="Porter K.M."/>
            <person name="Ramsey Y."/>
            <person name="Reichwald K."/>
            <person name="Rhodes S."/>
            <person name="Ridler K.A."/>
            <person name="Schlessinger D."/>
            <person name="Schueler M.G."/>
            <person name="Sehra H.K."/>
            <person name="Shaw-Smith C."/>
            <person name="Shen H."/>
            <person name="Sheridan E.M."/>
            <person name="Shownkeen R."/>
            <person name="Skuce C.D."/>
            <person name="Smith M.L."/>
            <person name="Sotheran E.C."/>
            <person name="Steingruber H.E."/>
            <person name="Steward C.A."/>
            <person name="Storey R."/>
            <person name="Swann R.M."/>
            <person name="Swarbreck D."/>
            <person name="Tabor P.E."/>
            <person name="Taudien S."/>
            <person name="Taylor T."/>
            <person name="Teague B."/>
            <person name="Thomas K."/>
            <person name="Thorpe A."/>
            <person name="Timms K."/>
            <person name="Tracey A."/>
            <person name="Trevanion S."/>
            <person name="Tromans A.C."/>
            <person name="d'Urso M."/>
            <person name="Verduzco D."/>
            <person name="Villasana D."/>
            <person name="Waldron L."/>
            <person name="Wall M."/>
            <person name="Wang Q."/>
            <person name="Warren J."/>
            <person name="Warry G.L."/>
            <person name="Wei X."/>
            <person name="West A."/>
            <person name="Whitehead S.L."/>
            <person name="Whiteley M.N."/>
            <person name="Wilkinson J.E."/>
            <person name="Willey D.L."/>
            <person name="Williams G."/>
            <person name="Williams L."/>
            <person name="Williamson A."/>
            <person name="Williamson H."/>
            <person name="Wilming L."/>
            <person name="Woodmansey R.L."/>
            <person name="Wray P.W."/>
            <person name="Yen J."/>
            <person name="Zhang J."/>
            <person name="Zhou J."/>
            <person name="Zoghbi H."/>
            <person name="Zorilla S."/>
            <person name="Buck D."/>
            <person name="Reinhardt R."/>
            <person name="Poustka A."/>
            <person name="Rosenthal A."/>
            <person name="Lehrach H."/>
            <person name="Meindl A."/>
            <person name="Minx P.J."/>
            <person name="Hillier L.W."/>
            <person name="Willard H.F."/>
            <person name="Wilson R.K."/>
            <person name="Waterston R.H."/>
            <person name="Rice C.M."/>
            <person name="Vaudin M."/>
            <person name="Coulson A."/>
            <person name="Nelson D.L."/>
            <person name="Weinstock G."/>
            <person name="Sulston J.E."/>
            <person name="Durbin R.M."/>
            <person name="Hubbard T."/>
            <person name="Gibbs R.A."/>
            <person name="Beck S."/>
            <person name="Rogers J."/>
            <person name="Bentley D.R."/>
        </authorList>
    </citation>
    <scope>NUCLEOTIDE SEQUENCE [LARGE SCALE GENOMIC DNA]</scope>
</reference>
<reference key="7">
    <citation type="submission" date="2005-09" db="EMBL/GenBank/DDBJ databases">
        <authorList>
            <person name="Mural R.J."/>
            <person name="Istrail S."/>
            <person name="Sutton G."/>
            <person name="Florea L."/>
            <person name="Halpern A.L."/>
            <person name="Mobarry C.M."/>
            <person name="Lippert R."/>
            <person name="Walenz B."/>
            <person name="Shatkay H."/>
            <person name="Dew I."/>
            <person name="Miller J.R."/>
            <person name="Flanigan M.J."/>
            <person name="Edwards N.J."/>
            <person name="Bolanos R."/>
            <person name="Fasulo D."/>
            <person name="Halldorsson B.V."/>
            <person name="Hannenhalli S."/>
            <person name="Turner R."/>
            <person name="Yooseph S."/>
            <person name="Lu F."/>
            <person name="Nusskern D.R."/>
            <person name="Shue B.C."/>
            <person name="Zheng X.H."/>
            <person name="Zhong F."/>
            <person name="Delcher A.L."/>
            <person name="Huson D.H."/>
            <person name="Kravitz S.A."/>
            <person name="Mouchard L."/>
            <person name="Reinert K."/>
            <person name="Remington K.A."/>
            <person name="Clark A.G."/>
            <person name="Waterman M.S."/>
            <person name="Eichler E.E."/>
            <person name="Adams M.D."/>
            <person name="Hunkapiller M.W."/>
            <person name="Myers E.W."/>
            <person name="Venter J.C."/>
        </authorList>
    </citation>
    <scope>NUCLEOTIDE SEQUENCE [LARGE SCALE GENOMIC DNA]</scope>
</reference>
<reference key="8">
    <citation type="journal article" date="2004" name="Genome Res.">
        <title>The status, quality, and expansion of the NIH full-length cDNA project: the Mammalian Gene Collection (MGC).</title>
        <authorList>
            <consortium name="The MGC Project Team"/>
        </authorList>
    </citation>
    <scope>NUCLEOTIDE SEQUENCE [LARGE SCALE MRNA] (ISOFORM 1)</scope>
    <source>
        <tissue>Pancreas</tissue>
    </source>
</reference>
<reference key="9">
    <citation type="journal article" date="2000" name="J. Biol. Chem.">
        <title>MIP-T3, a novel protein linking tumor necrosis factor receptor-associated factor 3 to the microtubule network.</title>
        <authorList>
            <person name="Ling L."/>
            <person name="Goeddel D.V."/>
        </authorList>
    </citation>
    <scope>INTERACTION WITH TRAF3IP1</scope>
</reference>
<reference key="10">
    <citation type="journal article" date="2008" name="Cell">
        <title>Molecular and structural basis of cytokine receptor pleiotropy in the interleukin-4/13 system.</title>
        <authorList>
            <person name="LaPorte S.L."/>
            <person name="Juo Z.S."/>
            <person name="Vaclavikova J."/>
            <person name="Colf L.A."/>
            <person name="Qi X."/>
            <person name="Heller N.M."/>
            <person name="Keegan A.D."/>
            <person name="Garcia K.C."/>
        </authorList>
    </citation>
    <scope>X-RAY CRYSTALLOGRAPHY (3.0 ANGSTROMS) OF 29-342 IN COMPLEXES WITH IL4; IL4RA AND IL13</scope>
    <scope>DISULFIDE BONDS</scope>
    <scope>SUBUNIT</scope>
</reference>
<feature type="signal peptide" evidence="1">
    <location>
        <begin position="1"/>
        <end position="21"/>
    </location>
</feature>
<feature type="chain" id="PRO_0000010939" description="Interleukin-13 receptor subunit alpha-1">
    <location>
        <begin position="22"/>
        <end position="427"/>
    </location>
</feature>
<feature type="topological domain" description="Extracellular" evidence="1">
    <location>
        <begin position="22"/>
        <end position="343"/>
    </location>
</feature>
<feature type="transmembrane region" description="Helical" evidence="1">
    <location>
        <begin position="344"/>
        <end position="367"/>
    </location>
</feature>
<feature type="topological domain" description="Cytoplasmic" evidence="1">
    <location>
        <begin position="368"/>
        <end position="427"/>
    </location>
</feature>
<feature type="domain" description="Fibronectin type-III 1" evidence="2">
    <location>
        <begin position="34"/>
        <end position="123"/>
    </location>
</feature>
<feature type="domain" description="Fibronectin type-III 2" evidence="2">
    <location>
        <begin position="128"/>
        <end position="226"/>
    </location>
</feature>
<feature type="domain" description="Fibronectin type-III 3" evidence="2">
    <location>
        <begin position="227"/>
        <end position="339"/>
    </location>
</feature>
<feature type="short sequence motif" description="WSXWS motif">
    <location>
        <begin position="327"/>
        <end position="331"/>
    </location>
</feature>
<feature type="short sequence motif" description="Box 1 motif">
    <location>
        <begin position="374"/>
        <end position="382"/>
    </location>
</feature>
<feature type="glycosylation site" description="N-linked (GlcNAc...) asparagine" evidence="1">
    <location>
        <position position="37"/>
    </location>
</feature>
<feature type="glycosylation site" description="N-linked (GlcNAc...) asparagine" evidence="1">
    <location>
        <position position="61"/>
    </location>
</feature>
<feature type="glycosylation site" description="N-linked (GlcNAc...) asparagine" evidence="1">
    <location>
        <position position="105"/>
    </location>
</feature>
<feature type="glycosylation site" description="N-linked (GlcNAc...) asparagine" evidence="1">
    <location>
        <position position="138"/>
    </location>
</feature>
<feature type="glycosylation site" description="N-linked (GlcNAc...) asparagine" evidence="1">
    <location>
        <position position="157"/>
    </location>
</feature>
<feature type="glycosylation site" description="N-linked (GlcNAc...) asparagine" evidence="1">
    <location>
        <position position="235"/>
    </location>
</feature>
<feature type="glycosylation site" description="N-linked (GlcNAc...) asparagine" evidence="1">
    <location>
        <position position="265"/>
    </location>
</feature>
<feature type="glycosylation site" description="N-linked (GlcNAc...) asparagine" evidence="1">
    <location>
        <position position="293"/>
    </location>
</feature>
<feature type="glycosylation site" description="N-linked (GlcNAc...) asparagine" evidence="1">
    <location>
        <position position="329"/>
    </location>
</feature>
<feature type="glycosylation site" description="N-linked (GlcNAc...) asparagine" evidence="1">
    <location>
        <position position="341"/>
    </location>
</feature>
<feature type="disulfide bond" evidence="4">
    <location>
        <begin position="62"/>
        <end position="102"/>
    </location>
</feature>
<feature type="disulfide bond" evidence="4">
    <location>
        <begin position="95"/>
        <end position="117"/>
    </location>
</feature>
<feature type="disulfide bond" evidence="4">
    <location>
        <begin position="134"/>
        <end position="144"/>
    </location>
</feature>
<feature type="disulfide bond" evidence="4">
    <location>
        <begin position="173"/>
        <end position="185"/>
    </location>
</feature>
<feature type="disulfide bond" evidence="4">
    <location>
        <begin position="257"/>
        <end position="320"/>
    </location>
</feature>
<feature type="disulfide bond" evidence="4">
    <location>
        <begin position="282"/>
        <end position="296"/>
    </location>
</feature>
<feature type="splice variant" id="VSP_055587" description="In isoform 2." evidence="5">
    <original>QE</original>
    <variation>RF</variation>
    <location>
        <begin position="278"/>
        <end position="279"/>
    </location>
</feature>
<feature type="splice variant" id="VSP_055588" description="In isoform 2." evidence="5">
    <location>
        <begin position="280"/>
        <end position="427"/>
    </location>
</feature>
<feature type="sequence conflict" description="In Ref. 3; AAB37127." evidence="6" ref="3">
    <original>T</original>
    <variation>I</variation>
    <location>
        <position position="130"/>
    </location>
</feature>
<feature type="sequence conflict" description="In Ref. 3; AAB37127." evidence="6" ref="3">
    <original>G</original>
    <variation>D</variation>
    <location>
        <position position="358"/>
    </location>
</feature>
<feature type="strand" evidence="8">
    <location>
        <begin position="36"/>
        <end position="43"/>
    </location>
</feature>
<feature type="turn" evidence="8">
    <location>
        <begin position="44"/>
        <end position="46"/>
    </location>
</feature>
<feature type="strand" evidence="8">
    <location>
        <begin position="47"/>
        <end position="53"/>
    </location>
</feature>
<feature type="strand" evidence="8">
    <location>
        <begin position="66"/>
        <end position="68"/>
    </location>
</feature>
<feature type="turn" evidence="10">
    <location>
        <begin position="71"/>
        <end position="73"/>
    </location>
</feature>
<feature type="strand" evidence="8">
    <location>
        <begin position="77"/>
        <end position="87"/>
    </location>
</feature>
<feature type="strand" evidence="10">
    <location>
        <begin position="90"/>
        <end position="92"/>
    </location>
</feature>
<feature type="strand" evidence="8">
    <location>
        <begin position="94"/>
        <end position="100"/>
    </location>
</feature>
<feature type="strand" evidence="8">
    <location>
        <begin position="114"/>
        <end position="118"/>
    </location>
</feature>
<feature type="turn" evidence="7">
    <location>
        <begin position="125"/>
        <end position="127"/>
    </location>
</feature>
<feature type="strand" evidence="8">
    <location>
        <begin position="130"/>
        <end position="137"/>
    </location>
</feature>
<feature type="turn" evidence="8">
    <location>
        <begin position="138"/>
        <end position="140"/>
    </location>
</feature>
<feature type="strand" evidence="8">
    <location>
        <begin position="141"/>
        <end position="147"/>
    </location>
</feature>
<feature type="strand" evidence="8">
    <location>
        <begin position="158"/>
        <end position="166"/>
    </location>
</feature>
<feature type="strand" evidence="10">
    <location>
        <begin position="171"/>
        <end position="173"/>
    </location>
</feature>
<feature type="strand" evidence="8">
    <location>
        <begin position="176"/>
        <end position="179"/>
    </location>
</feature>
<feature type="strand" evidence="8">
    <location>
        <begin position="182"/>
        <end position="188"/>
    </location>
</feature>
<feature type="strand" evidence="8">
    <location>
        <begin position="202"/>
        <end position="208"/>
    </location>
</feature>
<feature type="strand" evidence="8">
    <location>
        <begin position="216"/>
        <end position="220"/>
    </location>
</feature>
<feature type="strand" evidence="8">
    <location>
        <begin position="222"/>
        <end position="227"/>
    </location>
</feature>
<feature type="strand" evidence="9">
    <location>
        <begin position="232"/>
        <end position="239"/>
    </location>
</feature>
<feature type="strand" evidence="9">
    <location>
        <begin position="242"/>
        <end position="248"/>
    </location>
</feature>
<feature type="helix" evidence="9">
    <location>
        <begin position="252"/>
        <end position="255"/>
    </location>
</feature>
<feature type="strand" evidence="9">
    <location>
        <begin position="258"/>
        <end position="265"/>
    </location>
</feature>
<feature type="strand" evidence="9">
    <location>
        <begin position="267"/>
        <end position="269"/>
    </location>
</feature>
<feature type="strand" evidence="9">
    <location>
        <begin position="273"/>
        <end position="278"/>
    </location>
</feature>
<feature type="strand" evidence="9">
    <location>
        <begin position="285"/>
        <end position="288"/>
    </location>
</feature>
<feature type="strand" evidence="8">
    <location>
        <begin position="292"/>
        <end position="299"/>
    </location>
</feature>
<feature type="strand" evidence="9">
    <location>
        <begin position="309"/>
        <end position="316"/>
    </location>
</feature>
<feature type="helix" evidence="9">
    <location>
        <begin position="318"/>
        <end position="320"/>
    </location>
</feature>
<feature type="strand" evidence="8">
    <location>
        <begin position="334"/>
        <end position="337"/>
    </location>
</feature>
<name>I13R1_HUMAN</name>
<accession>P78552</accession>
<accession>O95646</accession>
<accession>Q5JSL4</accession>
<accession>Q99656</accession>
<accession>Q9UDY5</accession>
<organism>
    <name type="scientific">Homo sapiens</name>
    <name type="common">Human</name>
    <dbReference type="NCBI Taxonomy" id="9606"/>
    <lineage>
        <taxon>Eukaryota</taxon>
        <taxon>Metazoa</taxon>
        <taxon>Chordata</taxon>
        <taxon>Craniata</taxon>
        <taxon>Vertebrata</taxon>
        <taxon>Euteleostomi</taxon>
        <taxon>Mammalia</taxon>
        <taxon>Eutheria</taxon>
        <taxon>Euarchontoglires</taxon>
        <taxon>Primates</taxon>
        <taxon>Haplorrhini</taxon>
        <taxon>Catarrhini</taxon>
        <taxon>Hominidae</taxon>
        <taxon>Homo</taxon>
    </lineage>
</organism>
<comment type="function">
    <text>Binds with low affinity to interleukin-13 (IL13). Together with IL4RA can form a functional receptor for IL13. Also serves as an alternate accessory protein to the common cytokine receptor gamma chain for interleukin-4 (IL4) signaling, but cannot replace the function of IL2RG in allowing enhanced interleukin-2 (IL2) binding activity.</text>
</comment>
<comment type="subunit">
    <text evidence="3 4">Interleukin-13 receptor is a complex of IL4R, IL13RA1, and possibly other components. Interacts with TRAF3IP1. Interacts with IL4 (PubMed:18243101).</text>
</comment>
<comment type="interaction">
    <interactant intactId="EBI-1391535">
        <id>P78552</id>
    </interactant>
    <interactant intactId="EBI-1647828">
        <id>P35225</id>
        <label>IL13</label>
    </interactant>
    <organismsDiffer>false</organismsDiffer>
    <experiments>7</experiments>
</comment>
<comment type="interaction">
    <interactant intactId="EBI-1391535">
        <id>P78552</id>
    </interactant>
    <interactant intactId="EBI-367025">
        <id>P05112</id>
        <label>IL4</label>
    </interactant>
    <organismsDiffer>false</organismsDiffer>
    <experiments>3</experiments>
</comment>
<comment type="interaction">
    <interactant intactId="EBI-1391535">
        <id>P78552</id>
    </interactant>
    <interactant intactId="EBI-928811">
        <id>Q8TDR0</id>
        <label>TRAF3IP1</label>
    </interactant>
    <organismsDiffer>false</organismsDiffer>
    <experiments>3</experiments>
</comment>
<comment type="subcellular location">
    <subcellularLocation>
        <location>Membrane</location>
        <topology>Single-pass type I membrane protein</topology>
    </subcellularLocation>
</comment>
<comment type="alternative products">
    <event type="alternative splicing"/>
    <isoform>
        <id>P78552-1</id>
        <name>1</name>
        <sequence type="displayed"/>
    </isoform>
    <isoform>
        <id>P78552-2</id>
        <name>2</name>
        <sequence type="described" ref="VSP_055587 VSP_055588"/>
    </isoform>
</comment>
<comment type="tissue specificity">
    <text>Ubiquitous. Highest levels in heart, liver, skeletal muscle and ovary; lowest levels in brain, lung and kidney. Also found in B-cells, T-cells and endothelial cells.</text>
</comment>
<comment type="domain">
    <text>The WSXWS motif appears to be necessary for proper protein folding and thereby efficient intracellular transport and cell-surface receptor binding.</text>
</comment>
<comment type="domain">
    <text>The box 1 motif is required for JAK interaction and/or activation.</text>
</comment>
<comment type="similarity">
    <text evidence="6">Belongs to the type I cytokine receptor family. Type 5 subfamily.</text>
</comment>
<proteinExistence type="evidence at protein level"/>
<keyword id="KW-0002">3D-structure</keyword>
<keyword id="KW-0025">Alternative splicing</keyword>
<keyword id="KW-1015">Disulfide bond</keyword>
<keyword id="KW-0325">Glycoprotein</keyword>
<keyword id="KW-0472">Membrane</keyword>
<keyword id="KW-1267">Proteomics identification</keyword>
<keyword id="KW-0675">Receptor</keyword>
<keyword id="KW-1185">Reference proteome</keyword>
<keyword id="KW-0677">Repeat</keyword>
<keyword id="KW-0732">Signal</keyword>
<keyword id="KW-0812">Transmembrane</keyword>
<keyword id="KW-1133">Transmembrane helix</keyword>
<dbReference type="EMBL" id="Y10659">
    <property type="protein sequence ID" value="CAA71669.1"/>
    <property type="molecule type" value="mRNA"/>
</dbReference>
<dbReference type="EMBL" id="Y09328">
    <property type="protein sequence ID" value="CAA70508.1"/>
    <property type="molecule type" value="mRNA"/>
</dbReference>
<dbReference type="EMBL" id="U62858">
    <property type="protein sequence ID" value="AAB37127.1"/>
    <property type="molecule type" value="mRNA"/>
</dbReference>
<dbReference type="EMBL" id="U81379">
    <property type="protein sequence ID" value="AAD00510.3"/>
    <property type="molecule type" value="mRNA"/>
</dbReference>
<dbReference type="EMBL" id="U81380">
    <property type="protein sequence ID" value="AAD00511.2"/>
    <property type="molecule type" value="mRNA"/>
</dbReference>
<dbReference type="EMBL" id="AK313467">
    <property type="protein sequence ID" value="BAG36253.1"/>
    <property type="molecule type" value="mRNA"/>
</dbReference>
<dbReference type="EMBL" id="AL391280">
    <property type="status" value="NOT_ANNOTATED_CDS"/>
    <property type="molecule type" value="Genomic_DNA"/>
</dbReference>
<dbReference type="EMBL" id="CH471161">
    <property type="protein sequence ID" value="EAW89893.1"/>
    <property type="molecule type" value="Genomic_DNA"/>
</dbReference>
<dbReference type="EMBL" id="BC009960">
    <property type="protein sequence ID" value="AAH09960.1"/>
    <property type="molecule type" value="mRNA"/>
</dbReference>
<dbReference type="CCDS" id="CCDS14573.1">
    <molecule id="P78552-1"/>
</dbReference>
<dbReference type="RefSeq" id="NP_001551.1">
    <molecule id="P78552-1"/>
    <property type="nucleotide sequence ID" value="NM_001560.3"/>
</dbReference>
<dbReference type="PDB" id="3BPN">
    <property type="method" value="X-ray"/>
    <property type="resolution" value="3.02 A"/>
    <property type="chains" value="C=29-342"/>
</dbReference>
<dbReference type="PDB" id="3BPO">
    <property type="method" value="X-ray"/>
    <property type="resolution" value="3.00 A"/>
    <property type="chains" value="C=29-342"/>
</dbReference>
<dbReference type="PDB" id="4HWB">
    <property type="method" value="X-ray"/>
    <property type="resolution" value="2.61 A"/>
    <property type="chains" value="A=223-336"/>
</dbReference>
<dbReference type="PDB" id="5E4E">
    <property type="method" value="X-ray"/>
    <property type="resolution" value="3.00 A"/>
    <property type="chains" value="C=23-340"/>
</dbReference>
<dbReference type="PDBsum" id="3BPN"/>
<dbReference type="PDBsum" id="3BPO"/>
<dbReference type="PDBsum" id="4HWB"/>
<dbReference type="PDBsum" id="5E4E"/>
<dbReference type="SMR" id="P78552"/>
<dbReference type="BioGRID" id="109811">
    <property type="interactions" value="21"/>
</dbReference>
<dbReference type="ComplexPortal" id="CPX-624">
    <property type="entry name" value="Interleukin-4 receptor-ligand type-2 complex"/>
</dbReference>
<dbReference type="ComplexPortal" id="CPX-844">
    <property type="entry name" value="Interleukin-13 receptor-ligand alpha 1 complex"/>
</dbReference>
<dbReference type="CORUM" id="P78552"/>
<dbReference type="DIP" id="DIP-3225N"/>
<dbReference type="FunCoup" id="P78552">
    <property type="interactions" value="480"/>
</dbReference>
<dbReference type="IntAct" id="P78552">
    <property type="interactions" value="16"/>
</dbReference>
<dbReference type="STRING" id="9606.ENSP00000360730"/>
<dbReference type="ChEMBL" id="CHEMBL3831285"/>
<dbReference type="GuidetoPHARMACOLOGY" id="1700"/>
<dbReference type="TCDB" id="8.A.152.1.9">
    <property type="family name" value="the interleukin receptor (ilr) family"/>
</dbReference>
<dbReference type="GlyConnect" id="2052">
    <property type="glycosylation" value="1 N-Linked glycan (1 site)"/>
</dbReference>
<dbReference type="GlyCosmos" id="P78552">
    <property type="glycosylation" value="11 sites, 2 glycans"/>
</dbReference>
<dbReference type="GlyGen" id="P78552">
    <property type="glycosylation" value="11 sites, 5 N-linked glycans (6 sites)"/>
</dbReference>
<dbReference type="iPTMnet" id="P78552"/>
<dbReference type="PhosphoSitePlus" id="P78552"/>
<dbReference type="BioMuta" id="IL13RA1"/>
<dbReference type="DMDM" id="2494718"/>
<dbReference type="jPOST" id="P78552"/>
<dbReference type="MassIVE" id="P78552"/>
<dbReference type="PaxDb" id="9606-ENSP00000360730"/>
<dbReference type="PeptideAtlas" id="P78552"/>
<dbReference type="ProteomicsDB" id="57649">
    <molecule id="P78552-1"/>
</dbReference>
<dbReference type="ProteomicsDB" id="84133"/>
<dbReference type="Pumba" id="P78552"/>
<dbReference type="ABCD" id="P78552">
    <property type="antibodies" value="17 sequenced antibodies"/>
</dbReference>
<dbReference type="Antibodypedia" id="385">
    <property type="antibodies" value="598 antibodies from 38 providers"/>
</dbReference>
<dbReference type="DNASU" id="3597"/>
<dbReference type="Ensembl" id="ENST00000371642.1">
    <molecule id="P78552-2"/>
    <property type="protein sequence ID" value="ENSP00000360705.1"/>
    <property type="gene ID" value="ENSG00000131724.11"/>
</dbReference>
<dbReference type="Ensembl" id="ENST00000371666.8">
    <molecule id="P78552-1"/>
    <property type="protein sequence ID" value="ENSP00000360730.3"/>
    <property type="gene ID" value="ENSG00000131724.11"/>
</dbReference>
<dbReference type="GeneID" id="3597"/>
<dbReference type="KEGG" id="hsa:3597"/>
<dbReference type="MANE-Select" id="ENST00000371666.8">
    <property type="protein sequence ID" value="ENSP00000360730.3"/>
    <property type="RefSeq nucleotide sequence ID" value="NM_001560.3"/>
    <property type="RefSeq protein sequence ID" value="NP_001551.1"/>
</dbReference>
<dbReference type="UCSC" id="uc004eqr.2">
    <molecule id="P78552-1"/>
    <property type="organism name" value="human"/>
</dbReference>
<dbReference type="AGR" id="HGNC:5974"/>
<dbReference type="CTD" id="3597"/>
<dbReference type="DisGeNET" id="3597"/>
<dbReference type="GeneCards" id="IL13RA1"/>
<dbReference type="HGNC" id="HGNC:5974">
    <property type="gene designation" value="IL13RA1"/>
</dbReference>
<dbReference type="HPA" id="ENSG00000131724">
    <property type="expression patterns" value="Low tissue specificity"/>
</dbReference>
<dbReference type="MIM" id="300119">
    <property type="type" value="gene"/>
</dbReference>
<dbReference type="neXtProt" id="NX_P78552"/>
<dbReference type="OpenTargets" id="ENSG00000131724"/>
<dbReference type="PharmGKB" id="PA200"/>
<dbReference type="VEuPathDB" id="HostDB:ENSG00000131724"/>
<dbReference type="eggNOG" id="ENOG502RYXH">
    <property type="taxonomic scope" value="Eukaryota"/>
</dbReference>
<dbReference type="GeneTree" id="ENSGT00940000160896"/>
<dbReference type="HOGENOM" id="CLU_039945_1_0_1"/>
<dbReference type="InParanoid" id="P78552"/>
<dbReference type="OMA" id="RPVCASK"/>
<dbReference type="OrthoDB" id="9940625at2759"/>
<dbReference type="PAN-GO" id="P78552">
    <property type="GO annotations" value="8 GO annotations based on evolutionary models"/>
</dbReference>
<dbReference type="PhylomeDB" id="P78552"/>
<dbReference type="TreeFam" id="TF331549"/>
<dbReference type="PathwayCommons" id="P78552"/>
<dbReference type="Reactome" id="R-HSA-6785807">
    <property type="pathway name" value="Interleukin-4 and Interleukin-13 signaling"/>
</dbReference>
<dbReference type="SignaLink" id="P78552"/>
<dbReference type="SIGNOR" id="P78552"/>
<dbReference type="BioGRID-ORCS" id="3597">
    <property type="hits" value="8 hits in 782 CRISPR screens"/>
</dbReference>
<dbReference type="ChiTaRS" id="IL13RA1">
    <property type="organism name" value="human"/>
</dbReference>
<dbReference type="EvolutionaryTrace" id="P78552"/>
<dbReference type="GeneWiki" id="Interleukin_13_receptor,_alpha_1"/>
<dbReference type="GenomeRNAi" id="3597"/>
<dbReference type="Pharos" id="P78552">
    <property type="development level" value="Tbio"/>
</dbReference>
<dbReference type="PRO" id="PR:P78552"/>
<dbReference type="Proteomes" id="UP000005640">
    <property type="component" value="Chromosome X"/>
</dbReference>
<dbReference type="RNAct" id="P78552">
    <property type="molecule type" value="protein"/>
</dbReference>
<dbReference type="Bgee" id="ENSG00000131724">
    <property type="expression patterns" value="Expressed in esophagus squamous epithelium and 203 other cell types or tissues"/>
</dbReference>
<dbReference type="ExpressionAtlas" id="P78552">
    <property type="expression patterns" value="baseline and differential"/>
</dbReference>
<dbReference type="GO" id="GO:0009897">
    <property type="term" value="C:external side of plasma membrane"/>
    <property type="evidence" value="ECO:0000318"/>
    <property type="project" value="GO_Central"/>
</dbReference>
<dbReference type="GO" id="GO:0005898">
    <property type="term" value="C:interleukin-13 receptor complex"/>
    <property type="evidence" value="ECO:0000304"/>
    <property type="project" value="ProtInc"/>
</dbReference>
<dbReference type="GO" id="GO:0005886">
    <property type="term" value="C:plasma membrane"/>
    <property type="evidence" value="ECO:0000304"/>
    <property type="project" value="Reactome"/>
</dbReference>
<dbReference type="GO" id="GO:0043235">
    <property type="term" value="C:receptor complex"/>
    <property type="evidence" value="ECO:0000318"/>
    <property type="project" value="GO_Central"/>
</dbReference>
<dbReference type="GO" id="GO:0019955">
    <property type="term" value="F:cytokine binding"/>
    <property type="evidence" value="ECO:0000318"/>
    <property type="project" value="GO_Central"/>
</dbReference>
<dbReference type="GO" id="GO:0004896">
    <property type="term" value="F:cytokine receptor activity"/>
    <property type="evidence" value="ECO:0000318"/>
    <property type="project" value="GO_Central"/>
</dbReference>
<dbReference type="GO" id="GO:0007166">
    <property type="term" value="P:cell surface receptor signaling pathway"/>
    <property type="evidence" value="ECO:0000304"/>
    <property type="project" value="ProtInc"/>
</dbReference>
<dbReference type="GO" id="GO:0019221">
    <property type="term" value="P:cytokine-mediated signaling pathway"/>
    <property type="evidence" value="ECO:0000318"/>
    <property type="project" value="GO_Central"/>
</dbReference>
<dbReference type="GO" id="GO:0002639">
    <property type="term" value="P:positive regulation of immunoglobulin production"/>
    <property type="evidence" value="ECO:0000318"/>
    <property type="project" value="GO_Central"/>
</dbReference>
<dbReference type="CDD" id="cd00063">
    <property type="entry name" value="FN3"/>
    <property type="match status" value="1"/>
</dbReference>
<dbReference type="FunFam" id="2.60.40.10:FF:000717">
    <property type="entry name" value="interleukin-13 receptor subunit alpha-1 isoform X1"/>
    <property type="match status" value="1"/>
</dbReference>
<dbReference type="FunFam" id="2.60.40.10:FF:000861">
    <property type="entry name" value="interleukin-13 receptor subunit alpha-1 isoform X1"/>
    <property type="match status" value="1"/>
</dbReference>
<dbReference type="FunFam" id="2.60.40.10:FF:000851">
    <property type="entry name" value="interleukin-13 receptor subunit alpha-1 isoform X2"/>
    <property type="match status" value="1"/>
</dbReference>
<dbReference type="Gene3D" id="2.60.40.10">
    <property type="entry name" value="Immunoglobulins"/>
    <property type="match status" value="3"/>
</dbReference>
<dbReference type="InterPro" id="IPR003961">
    <property type="entry name" value="FN3_dom"/>
</dbReference>
<dbReference type="InterPro" id="IPR036116">
    <property type="entry name" value="FN3_sf"/>
</dbReference>
<dbReference type="InterPro" id="IPR013783">
    <property type="entry name" value="Ig-like_fold"/>
</dbReference>
<dbReference type="InterPro" id="IPR040566">
    <property type="entry name" value="Il13Ra_Ig"/>
</dbReference>
<dbReference type="InterPro" id="IPR003532">
    <property type="entry name" value="Short_hematopoietin_rcpt_2_CS"/>
</dbReference>
<dbReference type="InterPro" id="IPR015321">
    <property type="entry name" value="TypeI_recpt_CBD"/>
</dbReference>
<dbReference type="PANTHER" id="PTHR23037">
    <property type="entry name" value="CYTOKINE RECEPTOR"/>
    <property type="match status" value="1"/>
</dbReference>
<dbReference type="PANTHER" id="PTHR23037:SF46">
    <property type="entry name" value="INTERLEUKIN 5 RECEPTOR SUBUNIT ALPHA"/>
    <property type="match status" value="1"/>
</dbReference>
<dbReference type="Pfam" id="PF18001">
    <property type="entry name" value="Il13Ra_Ig"/>
    <property type="match status" value="1"/>
</dbReference>
<dbReference type="Pfam" id="PF09240">
    <property type="entry name" value="IL6Ra-bind"/>
    <property type="match status" value="1"/>
</dbReference>
<dbReference type="SUPFAM" id="SSF49265">
    <property type="entry name" value="Fibronectin type III"/>
    <property type="match status" value="2"/>
</dbReference>
<dbReference type="PROSITE" id="PS50853">
    <property type="entry name" value="FN3"/>
    <property type="match status" value="3"/>
</dbReference>
<dbReference type="PROSITE" id="PS01356">
    <property type="entry name" value="HEMATOPO_REC_S_F2"/>
    <property type="match status" value="1"/>
</dbReference>
<gene>
    <name type="primary">IL13RA1</name>
    <name type="synonym">IL13R</name>
    <name type="synonym">IL13RA</name>
</gene>
<protein>
    <recommendedName>
        <fullName>Interleukin-13 receptor subunit alpha-1</fullName>
        <shortName>IL-13 receptor subunit alpha-1</shortName>
        <shortName>IL-13R subunit alpha-1</shortName>
        <shortName>IL-13R-alpha-1</shortName>
        <shortName>IL-13RA1</shortName>
    </recommendedName>
    <alternativeName>
        <fullName>Cancer/testis antigen 19</fullName>
        <shortName>CT19</shortName>
    </alternativeName>
    <cdAntigenName>CD213a1</cdAntigenName>
</protein>
<evidence type="ECO:0000255" key="1"/>
<evidence type="ECO:0000255" key="2">
    <source>
        <dbReference type="PROSITE-ProRule" id="PRU00316"/>
    </source>
</evidence>
<evidence type="ECO:0000269" key="3">
    <source>
    </source>
</evidence>
<evidence type="ECO:0000269" key="4">
    <source>
    </source>
</evidence>
<evidence type="ECO:0000303" key="5">
    <source ref="4"/>
</evidence>
<evidence type="ECO:0000305" key="6"/>
<evidence type="ECO:0007829" key="7">
    <source>
        <dbReference type="PDB" id="3BPN"/>
    </source>
</evidence>
<evidence type="ECO:0007829" key="8">
    <source>
        <dbReference type="PDB" id="3BPO"/>
    </source>
</evidence>
<evidence type="ECO:0007829" key="9">
    <source>
        <dbReference type="PDB" id="4HWB"/>
    </source>
</evidence>
<evidence type="ECO:0007829" key="10">
    <source>
        <dbReference type="PDB" id="5E4E"/>
    </source>
</evidence>